<evidence type="ECO:0000250" key="1">
    <source>
        <dbReference type="UniProtKB" id="P49366"/>
    </source>
</evidence>
<evidence type="ECO:0000255" key="2"/>
<evidence type="ECO:0000269" key="3">
    <source>
    </source>
</evidence>
<evidence type="ECO:0000303" key="4">
    <source>
    </source>
</evidence>
<evidence type="ECO:0000305" key="5"/>
<evidence type="ECO:0000312" key="6">
    <source>
        <dbReference type="EMBL" id="EAN77700.1"/>
    </source>
</evidence>
<evidence type="ECO:0000312" key="7">
    <source>
        <dbReference type="Proteomes" id="UP000008524"/>
    </source>
</evidence>
<evidence type="ECO:0007829" key="8">
    <source>
        <dbReference type="PDB" id="6DFT"/>
    </source>
</evidence>
<sequence length="461" mass="50170">MAELAKSAVLVSSCTDDLLGDAKQVVVGPNQEDLHSAEAVLNRYSTVGFQASNLARAFSICEMMLTPQSPSPSLMPTEGDQASESPVMVQPTLFVGVTANLFGTGCREAIRFLCTECVPLPNGVEPATPLDDMAGISCDGTGALKPSPCDSRALIHVLVVSGGAMEHDIRRACESYKLSRDGAEEEGEQFHHPVERDRSRSKGTDCHFGNVRYNSSGVASRNLFSCVMRCLVKRLAEAQRKEKANREAAPIPEAYYDVCSWAITPSTLWYMAGLWMADIFTEALQETGEVTDEKVASEEGLKRAKSTVLYWAARNGVPIFSPSLTDGDIMEFILTAGDTGVPLLQLDLVADIHRLNRLAMRSRRTGMMILGGGVVKHHVCNANLMRNGADYAVFLNNAQEFDGSDAGARPGEAVSWGKLRLDSTAVKVYSEVTIVFPLIVVHVFVAWVRMMRSKGKENIRS</sequence>
<dbReference type="EC" id="2.5.1.46" evidence="3"/>
<dbReference type="EMBL" id="CM000208">
    <property type="protein sequence ID" value="EAN77700.1"/>
    <property type="molecule type" value="Genomic_DNA"/>
</dbReference>
<dbReference type="RefSeq" id="XP_822528.1">
    <property type="nucleotide sequence ID" value="XM_817435.1"/>
</dbReference>
<dbReference type="PDB" id="6DFT">
    <property type="method" value="X-ray"/>
    <property type="resolution" value="3.50 A"/>
    <property type="chains" value="A/C/E/G/I/K=1-461"/>
</dbReference>
<dbReference type="PDBsum" id="6DFT"/>
<dbReference type="SMR" id="Q38BX0"/>
<dbReference type="STRING" id="185431.Q38BX0"/>
<dbReference type="PaxDb" id="5691-EAN77700"/>
<dbReference type="GeneID" id="3662232"/>
<dbReference type="KEGG" id="tbr:Tb10.70.4900"/>
<dbReference type="VEuPathDB" id="TriTrypDB:Tb927.10.2750"/>
<dbReference type="eggNOG" id="KOG2924">
    <property type="taxonomic scope" value="Eukaryota"/>
</dbReference>
<dbReference type="InParanoid" id="Q38BX0"/>
<dbReference type="OMA" id="WGKVRME"/>
<dbReference type="OrthoDB" id="294378at2759"/>
<dbReference type="BRENDA" id="2.5.1.46">
    <property type="organism ID" value="6520"/>
</dbReference>
<dbReference type="UniPathway" id="UPA00354"/>
<dbReference type="Proteomes" id="UP000008524">
    <property type="component" value="Chromosome 10"/>
</dbReference>
<dbReference type="GO" id="GO:1902494">
    <property type="term" value="C:catalytic complex"/>
    <property type="evidence" value="ECO:0000314"/>
    <property type="project" value="UniProtKB"/>
</dbReference>
<dbReference type="GO" id="GO:0005737">
    <property type="term" value="C:cytoplasm"/>
    <property type="evidence" value="ECO:0000314"/>
    <property type="project" value="GeneDB"/>
</dbReference>
<dbReference type="GO" id="GO:0016020">
    <property type="term" value="C:membrane"/>
    <property type="evidence" value="ECO:0007669"/>
    <property type="project" value="UniProtKB-SubCell"/>
</dbReference>
<dbReference type="GO" id="GO:0034038">
    <property type="term" value="F:deoxyhypusine synthase activity"/>
    <property type="evidence" value="ECO:0000314"/>
    <property type="project" value="UniProtKB"/>
</dbReference>
<dbReference type="GO" id="GO:0042803">
    <property type="term" value="F:protein homodimerization activity"/>
    <property type="evidence" value="ECO:0000314"/>
    <property type="project" value="UniProtKB"/>
</dbReference>
<dbReference type="GO" id="GO:0008612">
    <property type="term" value="P:peptidyl-lysine modification to peptidyl-hypusine"/>
    <property type="evidence" value="ECO:0000314"/>
    <property type="project" value="UniProtKB"/>
</dbReference>
<dbReference type="GO" id="GO:0051290">
    <property type="term" value="P:protein heterotetramerization"/>
    <property type="evidence" value="ECO:0000314"/>
    <property type="project" value="UniProtKB"/>
</dbReference>
<dbReference type="GO" id="GO:2000765">
    <property type="term" value="P:regulation of cytoplasmic translation"/>
    <property type="evidence" value="ECO:0000315"/>
    <property type="project" value="UniProtKB"/>
</dbReference>
<dbReference type="GO" id="GO:0008216">
    <property type="term" value="P:spermidine metabolic process"/>
    <property type="evidence" value="ECO:0000314"/>
    <property type="project" value="UniProtKB"/>
</dbReference>
<dbReference type="FunFam" id="3.40.910.10:FF:000010">
    <property type="entry name" value="Deoxyhypusine synthase"/>
    <property type="match status" value="1"/>
</dbReference>
<dbReference type="Gene3D" id="3.40.910.10">
    <property type="entry name" value="Deoxyhypusine synthase"/>
    <property type="match status" value="2"/>
</dbReference>
<dbReference type="InterPro" id="IPR002773">
    <property type="entry name" value="Deoxyhypusine_synthase"/>
</dbReference>
<dbReference type="InterPro" id="IPR036982">
    <property type="entry name" value="Deoxyhypusine_synthase_sf"/>
</dbReference>
<dbReference type="InterPro" id="IPR029035">
    <property type="entry name" value="DHS-like_NAD/FAD-binding_dom"/>
</dbReference>
<dbReference type="PANTHER" id="PTHR11703">
    <property type="entry name" value="DEOXYHYPUSINE SYNTHASE"/>
    <property type="match status" value="1"/>
</dbReference>
<dbReference type="PANTHER" id="PTHR11703:SF1">
    <property type="entry name" value="DEOXYHYPUSINE SYNTHASE"/>
    <property type="match status" value="1"/>
</dbReference>
<dbReference type="Pfam" id="PF01916">
    <property type="entry name" value="DS"/>
    <property type="match status" value="1"/>
</dbReference>
<dbReference type="SUPFAM" id="SSF52467">
    <property type="entry name" value="DHS-like NAD/FAD-binding domain"/>
    <property type="match status" value="1"/>
</dbReference>
<comment type="function">
    <text evidence="3">In association with the non-catalytic regulatory subunit DHSp, catalyzes the NAD-dependent oxidative cleavage of spermidine and the subsequent transfer of the butylamine moiety of spermidine to the epsilon-amino group of a specific lysine residue of the eIF5A precursor protein to form the intermediate deoxyhypusine residue. Regulates protein levels of its regulatory subunit DHSp. Required for cell growth and survival.</text>
</comment>
<comment type="catalytic activity">
    <reaction evidence="3">
        <text>[eIF5A protein]-L-lysine + spermidine = [eIF5A protein]-deoxyhypusine + propane-1,3-diamine</text>
        <dbReference type="Rhea" id="RHEA:33299"/>
        <dbReference type="Rhea" id="RHEA-COMP:10143"/>
        <dbReference type="Rhea" id="RHEA-COMP:10144"/>
        <dbReference type="ChEBI" id="CHEBI:29969"/>
        <dbReference type="ChEBI" id="CHEBI:57484"/>
        <dbReference type="ChEBI" id="CHEBI:57834"/>
        <dbReference type="ChEBI" id="CHEBI:82657"/>
        <dbReference type="EC" id="2.5.1.46"/>
    </reaction>
</comment>
<comment type="cofactor">
    <cofactor evidence="3">
        <name>NAD(+)</name>
        <dbReference type="ChEBI" id="CHEBI:57540"/>
    </cofactor>
    <text evidence="5">The binding sites for NAD(+) are contained in the regulatory subunit DHSp.</text>
</comment>
<comment type="activity regulation">
    <text evidence="3">Allosterically activated by DHSp. Inhibited by spermididine analog N1-guanyl-1,7-diamineoheptane (GC7).</text>
</comment>
<comment type="biophysicochemical properties">
    <kinetics>
        <KM evidence="3">82 uM for NAD(+) (at 37 degrees Celsius when bound to regulatory subunit DHSp)</KM>
        <KM evidence="3">0.7 uM for IF5A (at 37 degrees Celsius when bound to regulatory subunit DHSp)</KM>
        <KM evidence="3">43 uM for spermidine (at 37 degrees Celsius when bound to regulatory subunit DHSp)</KM>
    </kinetics>
</comment>
<comment type="pathway">
    <text evidence="3">Protein modification; eIF5A hypusination.</text>
</comment>
<comment type="subunit">
    <text evidence="3">Heterotetramer formed by a homodimer of the non-catalytic regulatory subunit DHSp and a homodimer of the catalytic subunit DHSc where DHSc appears to bind spermidine and DHSp appears to bind NAD(+).</text>
</comment>
<comment type="subcellular location">
    <subcellularLocation>
        <location evidence="2">Membrane</location>
        <topology evidence="2">Single-pass membrane protein</topology>
    </subcellularLocation>
</comment>
<comment type="disruption phenotype">
    <text evidence="3">RNAi-mediated knockdown causes cell growth arrest followed by death, loss of DHSp expression and a failure to sustain infection in mice.</text>
</comment>
<comment type="similarity">
    <text evidence="5">Belongs to the deoxyhypusine synthase family.</text>
</comment>
<accession>Q38BX0</accession>
<feature type="chain" id="PRO_0000438976" description="Deoxyhypusine synthase" evidence="5">
    <location>
        <begin position="1"/>
        <end position="461"/>
    </location>
</feature>
<feature type="transmembrane region" description="Helical" evidence="2">
    <location>
        <begin position="428"/>
        <end position="448"/>
    </location>
</feature>
<feature type="active site" description="Nucleophile" evidence="1">
    <location>
        <position position="418"/>
    </location>
</feature>
<feature type="binding site" evidence="1">
    <location>
        <begin position="166"/>
        <end position="167"/>
    </location>
    <ligand>
        <name>spermidine</name>
        <dbReference type="ChEBI" id="CHEBI:57834"/>
    </ligand>
</feature>
<feature type="binding site" evidence="1">
    <location>
        <position position="331"/>
    </location>
    <ligand>
        <name>spermidine</name>
        <dbReference type="ChEBI" id="CHEBI:57834"/>
    </ligand>
</feature>
<feature type="binding site" evidence="1">
    <location>
        <position position="377"/>
    </location>
    <ligand>
        <name>spermidine</name>
        <dbReference type="ChEBI" id="CHEBI:57834"/>
    </ligand>
</feature>
<feature type="binding site" evidence="1">
    <location>
        <begin position="403"/>
        <end position="405"/>
    </location>
    <ligand>
        <name>spermidine</name>
        <dbReference type="ChEBI" id="CHEBI:57834"/>
    </ligand>
</feature>
<feature type="binding site" evidence="1">
    <location>
        <begin position="412"/>
        <end position="418"/>
    </location>
    <ligand>
        <name>spermidine</name>
        <dbReference type="ChEBI" id="CHEBI:57834"/>
    </ligand>
</feature>
<feature type="helix" evidence="8">
    <location>
        <begin position="37"/>
        <end position="43"/>
    </location>
</feature>
<feature type="helix" evidence="8">
    <location>
        <begin position="44"/>
        <end position="46"/>
    </location>
</feature>
<feature type="helix" evidence="8">
    <location>
        <begin position="49"/>
        <end position="64"/>
    </location>
</feature>
<feature type="strand" evidence="8">
    <location>
        <begin position="88"/>
        <end position="90"/>
    </location>
</feature>
<feature type="strand" evidence="8">
    <location>
        <begin position="92"/>
        <end position="97"/>
    </location>
</feature>
<feature type="helix" evidence="8">
    <location>
        <begin position="99"/>
        <end position="102"/>
    </location>
</feature>
<feature type="helix" evidence="8">
    <location>
        <begin position="106"/>
        <end position="115"/>
    </location>
</feature>
<feature type="strand" evidence="8">
    <location>
        <begin position="124"/>
        <end position="128"/>
    </location>
</feature>
<feature type="strand" evidence="8">
    <location>
        <begin position="157"/>
        <end position="160"/>
    </location>
</feature>
<feature type="helix" evidence="8">
    <location>
        <begin position="164"/>
        <end position="173"/>
    </location>
</feature>
<feature type="strand" evidence="8">
    <location>
        <begin position="205"/>
        <end position="214"/>
    </location>
</feature>
<feature type="helix" evidence="8">
    <location>
        <begin position="223"/>
        <end position="248"/>
    </location>
</feature>
<feature type="helix" evidence="8">
    <location>
        <begin position="265"/>
        <end position="286"/>
    </location>
</feature>
<feature type="helix" evidence="8">
    <location>
        <begin position="293"/>
        <end position="304"/>
    </location>
</feature>
<feature type="helix" evidence="8">
    <location>
        <begin position="308"/>
        <end position="315"/>
    </location>
</feature>
<feature type="helix" evidence="8">
    <location>
        <begin position="324"/>
        <end position="326"/>
    </location>
</feature>
<feature type="helix" evidence="8">
    <location>
        <begin position="329"/>
        <end position="337"/>
    </location>
</feature>
<feature type="helix" evidence="8">
    <location>
        <begin position="349"/>
        <end position="360"/>
    </location>
</feature>
<feature type="strand" evidence="8">
    <location>
        <begin position="363"/>
        <end position="371"/>
    </location>
</feature>
<feature type="helix" evidence="8">
    <location>
        <begin position="374"/>
        <end position="384"/>
    </location>
</feature>
<feature type="turn" evidence="8">
    <location>
        <begin position="385"/>
        <end position="387"/>
    </location>
</feature>
<feature type="strand" evidence="8">
    <location>
        <begin position="389"/>
        <end position="395"/>
    </location>
</feature>
<feature type="turn" evidence="8">
    <location>
        <begin position="405"/>
        <end position="407"/>
    </location>
</feature>
<feature type="helix" evidence="8">
    <location>
        <begin position="410"/>
        <end position="416"/>
    </location>
</feature>
<feature type="strand" evidence="8">
    <location>
        <begin position="418"/>
        <end position="427"/>
    </location>
</feature>
<feature type="helix" evidence="8">
    <location>
        <begin position="432"/>
        <end position="442"/>
    </location>
</feature>
<feature type="helix" evidence="8">
    <location>
        <begin position="444"/>
        <end position="453"/>
    </location>
</feature>
<reference evidence="7" key="1">
    <citation type="journal article" date="2005" name="Science">
        <title>The genome of the African trypanosome Trypanosoma brucei.</title>
        <authorList>
            <person name="Berriman M."/>
            <person name="Ghedin E."/>
            <person name="Hertz-Fowler C."/>
            <person name="Blandin G."/>
            <person name="Renauld H."/>
            <person name="Bartholomeu D.C."/>
            <person name="Lennard N.J."/>
            <person name="Caler E."/>
            <person name="Hamlin N.E."/>
            <person name="Haas B."/>
            <person name="Bohme U."/>
            <person name="Hannick L."/>
            <person name="Aslett M.A."/>
            <person name="Shallom J."/>
            <person name="Marcello L."/>
            <person name="Hou L."/>
            <person name="Wickstead B."/>
            <person name="Alsmark U.C.M."/>
            <person name="Arrowsmith C."/>
            <person name="Atkin R.J."/>
            <person name="Barron A.J."/>
            <person name="Bringaud F."/>
            <person name="Brooks K."/>
            <person name="Carrington M."/>
            <person name="Cherevach I."/>
            <person name="Chillingworth T.J."/>
            <person name="Churcher C."/>
            <person name="Clark L.N."/>
            <person name="Corton C.H."/>
            <person name="Cronin A."/>
            <person name="Davies R.M."/>
            <person name="Doggett J."/>
            <person name="Djikeng A."/>
            <person name="Feldblyum T."/>
            <person name="Field M.C."/>
            <person name="Fraser A."/>
            <person name="Goodhead I."/>
            <person name="Hance Z."/>
            <person name="Harper D."/>
            <person name="Harris B.R."/>
            <person name="Hauser H."/>
            <person name="Hostetler J."/>
            <person name="Ivens A."/>
            <person name="Jagels K."/>
            <person name="Johnson D."/>
            <person name="Johnson J."/>
            <person name="Jones K."/>
            <person name="Kerhornou A.X."/>
            <person name="Koo H."/>
            <person name="Larke N."/>
            <person name="Landfear S."/>
            <person name="Larkin C."/>
            <person name="Leech V."/>
            <person name="Line A."/>
            <person name="Lord A."/>
            <person name="Macleod A."/>
            <person name="Mooney P.J."/>
            <person name="Moule S."/>
            <person name="Martin D.M."/>
            <person name="Morgan G.W."/>
            <person name="Mungall K."/>
            <person name="Norbertczak H."/>
            <person name="Ormond D."/>
            <person name="Pai G."/>
            <person name="Peacock C.S."/>
            <person name="Peterson J."/>
            <person name="Quail M.A."/>
            <person name="Rabbinowitsch E."/>
            <person name="Rajandream M.A."/>
            <person name="Reitter C."/>
            <person name="Salzberg S.L."/>
            <person name="Sanders M."/>
            <person name="Schobel S."/>
            <person name="Sharp S."/>
            <person name="Simmonds M."/>
            <person name="Simpson A.J."/>
            <person name="Tallon L."/>
            <person name="Turner C.M."/>
            <person name="Tait A."/>
            <person name="Tivey A.R."/>
            <person name="Van Aken S."/>
            <person name="Walker D."/>
            <person name="Wanless D."/>
            <person name="Wang S."/>
            <person name="White B."/>
            <person name="White O."/>
            <person name="Whitehead S."/>
            <person name="Woodward J."/>
            <person name="Wortman J."/>
            <person name="Adams M.D."/>
            <person name="Embley T.M."/>
            <person name="Gull K."/>
            <person name="Ullu E."/>
            <person name="Barry J.D."/>
            <person name="Fairlamb A.H."/>
            <person name="Opperdoes F."/>
            <person name="Barrell B.G."/>
            <person name="Donelson J.E."/>
            <person name="Hall N."/>
            <person name="Fraser C.M."/>
            <person name="Melville S.E."/>
            <person name="El-Sayed N.M.A."/>
        </authorList>
    </citation>
    <scope>NUCLEOTIDE SEQUENCE [LARGE SCALE GENOMIC DNA]</scope>
    <source>
        <strain>927/4 GUTat10.1</strain>
    </source>
</reference>
<reference evidence="5" key="2">
    <citation type="journal article" date="2013" name="J. Biol. Chem.">
        <title>Allosteric activation of trypanosomatid deoxyhypusine synthase by a catalytically dead paralog.</title>
        <authorList>
            <person name="Nguyen S."/>
            <person name="Jones D.C."/>
            <person name="Wyllie S."/>
            <person name="Fairlamb A.H."/>
            <person name="Phillips M.A."/>
        </authorList>
    </citation>
    <scope>FUNCTION</scope>
    <scope>CATALYTIC ACTIVITY</scope>
    <scope>COFACTOR</scope>
    <scope>ACTIVITY REGULATION</scope>
    <scope>BIOPHYSICOCHEMICAL PROPERTIES</scope>
    <scope>PATHWAY</scope>
    <scope>SUBUNIT</scope>
    <scope>DISRUPTION PHENOTYPE</scope>
</reference>
<gene>
    <name evidence="4" type="primary">DHSc</name>
    <name evidence="6" type="ORF">Tb10.70.4900</name>
</gene>
<organism evidence="7">
    <name type="scientific">Trypanosoma brucei brucei (strain 927/4 GUTat10.1)</name>
    <dbReference type="NCBI Taxonomy" id="185431"/>
    <lineage>
        <taxon>Eukaryota</taxon>
        <taxon>Discoba</taxon>
        <taxon>Euglenozoa</taxon>
        <taxon>Kinetoplastea</taxon>
        <taxon>Metakinetoplastina</taxon>
        <taxon>Trypanosomatida</taxon>
        <taxon>Trypanosomatidae</taxon>
        <taxon>Trypanosoma</taxon>
    </lineage>
</organism>
<name>DHYSC_TRYB2</name>
<proteinExistence type="evidence at protein level"/>
<keyword id="KW-0002">3D-structure</keyword>
<keyword id="KW-0386">Hypusine biosynthesis</keyword>
<keyword id="KW-0472">Membrane</keyword>
<keyword id="KW-0520">NAD</keyword>
<keyword id="KW-1185">Reference proteome</keyword>
<keyword id="KW-0735">Signal-anchor</keyword>
<keyword id="KW-0808">Transferase</keyword>
<keyword id="KW-0812">Transmembrane</keyword>
<keyword id="KW-1133">Transmembrane helix</keyword>
<protein>
    <recommendedName>
        <fullName evidence="4">Deoxyhypusine synthase</fullName>
        <ecNumber evidence="3">2.5.1.46</ecNumber>
    </recommendedName>
</protein>